<dbReference type="EC" id="7.1.2.2" evidence="1"/>
<dbReference type="EMBL" id="CP001161">
    <property type="protein sequence ID" value="ACL30395.1"/>
    <property type="molecule type" value="Genomic_DNA"/>
</dbReference>
<dbReference type="RefSeq" id="WP_009873970.1">
    <property type="nucleotide sequence ID" value="NC_011833.1"/>
</dbReference>
<dbReference type="SMR" id="B8D8H3"/>
<dbReference type="KEGG" id="bap:BUAP5A_008"/>
<dbReference type="HOGENOM" id="CLU_022398_0_2_6"/>
<dbReference type="OrthoDB" id="9801639at2"/>
<dbReference type="Proteomes" id="UP000006904">
    <property type="component" value="Chromosome"/>
</dbReference>
<dbReference type="GO" id="GO:0005886">
    <property type="term" value="C:plasma membrane"/>
    <property type="evidence" value="ECO:0007669"/>
    <property type="project" value="UniProtKB-SubCell"/>
</dbReference>
<dbReference type="GO" id="GO:0045259">
    <property type="term" value="C:proton-transporting ATP synthase complex"/>
    <property type="evidence" value="ECO:0007669"/>
    <property type="project" value="UniProtKB-KW"/>
</dbReference>
<dbReference type="GO" id="GO:0005524">
    <property type="term" value="F:ATP binding"/>
    <property type="evidence" value="ECO:0007669"/>
    <property type="project" value="UniProtKB-UniRule"/>
</dbReference>
<dbReference type="GO" id="GO:0016887">
    <property type="term" value="F:ATP hydrolysis activity"/>
    <property type="evidence" value="ECO:0007669"/>
    <property type="project" value="InterPro"/>
</dbReference>
<dbReference type="GO" id="GO:0046933">
    <property type="term" value="F:proton-transporting ATP synthase activity, rotational mechanism"/>
    <property type="evidence" value="ECO:0007669"/>
    <property type="project" value="UniProtKB-UniRule"/>
</dbReference>
<dbReference type="CDD" id="cd18110">
    <property type="entry name" value="ATP-synt_F1_beta_C"/>
    <property type="match status" value="1"/>
</dbReference>
<dbReference type="CDD" id="cd18115">
    <property type="entry name" value="ATP-synt_F1_beta_N"/>
    <property type="match status" value="1"/>
</dbReference>
<dbReference type="CDD" id="cd01133">
    <property type="entry name" value="F1-ATPase_beta_CD"/>
    <property type="match status" value="1"/>
</dbReference>
<dbReference type="FunFam" id="1.10.1140.10:FF:000001">
    <property type="entry name" value="ATP synthase subunit beta"/>
    <property type="match status" value="1"/>
</dbReference>
<dbReference type="FunFam" id="2.40.10.170:FF:000003">
    <property type="entry name" value="ATP synthase subunit beta"/>
    <property type="match status" value="1"/>
</dbReference>
<dbReference type="FunFam" id="3.40.50.300:FF:000004">
    <property type="entry name" value="ATP synthase subunit beta"/>
    <property type="match status" value="1"/>
</dbReference>
<dbReference type="Gene3D" id="2.40.10.170">
    <property type="match status" value="1"/>
</dbReference>
<dbReference type="Gene3D" id="1.10.1140.10">
    <property type="entry name" value="Bovine Mitochondrial F1-atpase, Atp Synthase Beta Chain, Chain D, domain 3"/>
    <property type="match status" value="1"/>
</dbReference>
<dbReference type="Gene3D" id="3.40.50.300">
    <property type="entry name" value="P-loop containing nucleotide triphosphate hydrolases"/>
    <property type="match status" value="1"/>
</dbReference>
<dbReference type="HAMAP" id="MF_01347">
    <property type="entry name" value="ATP_synth_beta_bact"/>
    <property type="match status" value="1"/>
</dbReference>
<dbReference type="InterPro" id="IPR003593">
    <property type="entry name" value="AAA+_ATPase"/>
</dbReference>
<dbReference type="InterPro" id="IPR055190">
    <property type="entry name" value="ATP-synt_VA_C"/>
</dbReference>
<dbReference type="InterPro" id="IPR005722">
    <property type="entry name" value="ATP_synth_F1_bsu"/>
</dbReference>
<dbReference type="InterPro" id="IPR020003">
    <property type="entry name" value="ATPase_a/bsu_AS"/>
</dbReference>
<dbReference type="InterPro" id="IPR050053">
    <property type="entry name" value="ATPase_alpha/beta_chains"/>
</dbReference>
<dbReference type="InterPro" id="IPR004100">
    <property type="entry name" value="ATPase_F1/V1/A1_a/bsu_N"/>
</dbReference>
<dbReference type="InterPro" id="IPR036121">
    <property type="entry name" value="ATPase_F1/V1/A1_a/bsu_N_sf"/>
</dbReference>
<dbReference type="InterPro" id="IPR000194">
    <property type="entry name" value="ATPase_F1/V1/A1_a/bsu_nucl-bd"/>
</dbReference>
<dbReference type="InterPro" id="IPR024034">
    <property type="entry name" value="ATPase_F1/V1_b/a_C"/>
</dbReference>
<dbReference type="InterPro" id="IPR027417">
    <property type="entry name" value="P-loop_NTPase"/>
</dbReference>
<dbReference type="NCBIfam" id="TIGR01039">
    <property type="entry name" value="atpD"/>
    <property type="match status" value="1"/>
</dbReference>
<dbReference type="PANTHER" id="PTHR15184">
    <property type="entry name" value="ATP SYNTHASE"/>
    <property type="match status" value="1"/>
</dbReference>
<dbReference type="PANTHER" id="PTHR15184:SF71">
    <property type="entry name" value="ATP SYNTHASE SUBUNIT BETA, MITOCHONDRIAL"/>
    <property type="match status" value="1"/>
</dbReference>
<dbReference type="Pfam" id="PF00006">
    <property type="entry name" value="ATP-synt_ab"/>
    <property type="match status" value="1"/>
</dbReference>
<dbReference type="Pfam" id="PF02874">
    <property type="entry name" value="ATP-synt_ab_N"/>
    <property type="match status" value="1"/>
</dbReference>
<dbReference type="Pfam" id="PF22919">
    <property type="entry name" value="ATP-synt_VA_C"/>
    <property type="match status" value="1"/>
</dbReference>
<dbReference type="SMART" id="SM00382">
    <property type="entry name" value="AAA"/>
    <property type="match status" value="1"/>
</dbReference>
<dbReference type="SUPFAM" id="SSF47917">
    <property type="entry name" value="C-terminal domain of alpha and beta subunits of F1 ATP synthase"/>
    <property type="match status" value="1"/>
</dbReference>
<dbReference type="SUPFAM" id="SSF50615">
    <property type="entry name" value="N-terminal domain of alpha and beta subunits of F1 ATP synthase"/>
    <property type="match status" value="1"/>
</dbReference>
<dbReference type="SUPFAM" id="SSF52540">
    <property type="entry name" value="P-loop containing nucleoside triphosphate hydrolases"/>
    <property type="match status" value="1"/>
</dbReference>
<dbReference type="PROSITE" id="PS00152">
    <property type="entry name" value="ATPASE_ALPHA_BETA"/>
    <property type="match status" value="1"/>
</dbReference>
<reference key="1">
    <citation type="journal article" date="2009" name="Science">
        <title>The dynamics and time scale of ongoing genomic erosion in symbiotic bacteria.</title>
        <authorList>
            <person name="Moran N.A."/>
            <person name="McLaughlin H.J."/>
            <person name="Sorek R."/>
        </authorList>
    </citation>
    <scope>NUCLEOTIDE SEQUENCE [LARGE SCALE GENOMIC DNA]</scope>
    <source>
        <strain>5A</strain>
    </source>
</reference>
<accession>B8D8H3</accession>
<gene>
    <name evidence="1" type="primary">atpD</name>
    <name type="ordered locus">BUAP5A_008</name>
</gene>
<proteinExistence type="inferred from homology"/>
<name>ATPB_BUCA5</name>
<comment type="function">
    <text evidence="1">Produces ATP from ADP in the presence of a proton gradient across the membrane. The catalytic sites are hosted primarily by the beta subunits.</text>
</comment>
<comment type="catalytic activity">
    <reaction evidence="1">
        <text>ATP + H2O + 4 H(+)(in) = ADP + phosphate + 5 H(+)(out)</text>
        <dbReference type="Rhea" id="RHEA:57720"/>
        <dbReference type="ChEBI" id="CHEBI:15377"/>
        <dbReference type="ChEBI" id="CHEBI:15378"/>
        <dbReference type="ChEBI" id="CHEBI:30616"/>
        <dbReference type="ChEBI" id="CHEBI:43474"/>
        <dbReference type="ChEBI" id="CHEBI:456216"/>
        <dbReference type="EC" id="7.1.2.2"/>
    </reaction>
</comment>
<comment type="subunit">
    <text evidence="1">F-type ATPases have 2 components, CF(1) - the catalytic core - and CF(0) - the membrane proton channel. CF(1) has five subunits: alpha(3), beta(3), gamma(1), delta(1), epsilon(1). CF(0) has three main subunits: a(1), b(2) and c(9-12). The alpha and beta chains form an alternating ring which encloses part of the gamma chain. CF(1) is attached to CF(0) by a central stalk formed by the gamma and epsilon chains, while a peripheral stalk is formed by the delta and b chains.</text>
</comment>
<comment type="subcellular location">
    <subcellularLocation>
        <location evidence="1">Cell membrane</location>
        <topology evidence="1">Peripheral membrane protein</topology>
    </subcellularLocation>
</comment>
<comment type="similarity">
    <text evidence="1">Belongs to the ATPase alpha/beta chains family.</text>
</comment>
<protein>
    <recommendedName>
        <fullName evidence="1">ATP synthase subunit beta</fullName>
        <ecNumber evidence="1">7.1.2.2</ecNumber>
    </recommendedName>
    <alternativeName>
        <fullName evidence="1">ATP synthase F1 sector subunit beta</fullName>
    </alternativeName>
    <alternativeName>
        <fullName evidence="1">F-ATPase subunit beta</fullName>
    </alternativeName>
</protein>
<feature type="chain" id="PRO_1000166575" description="ATP synthase subunit beta">
    <location>
        <begin position="1"/>
        <end position="465"/>
    </location>
</feature>
<feature type="binding site" evidence="1">
    <location>
        <begin position="155"/>
        <end position="162"/>
    </location>
    <ligand>
        <name>ATP</name>
        <dbReference type="ChEBI" id="CHEBI:30616"/>
    </ligand>
</feature>
<evidence type="ECO:0000255" key="1">
    <source>
        <dbReference type="HAMAP-Rule" id="MF_01347"/>
    </source>
</evidence>
<sequence>MATGKIIQIIGAVVDVEFNQDSVPKIYNALEVKNKQYKLILEVQQQLGSGVVRTIAMGSSNGLKRGLIVTDLGHYIKVPVGEATLGRIINVLGETIDNKGALKNNQSDKIEYWEIHRSPPSYRDQASCREILETGIKVIDLICPFSKGGKVGLFGGAGVGKTVNMMELIRNIAVEHSGYSVFTGVGERTREGNDFYHEMNDSQVLDKVSLVYGQMNEPPGNRLRVAFTGLTIAEKFRDEGKDVLLFIDNIYRYTLAGTEVSALLGRMPSAVGYQPTLAEEMGLLQERITSTKNGSITSVQAVYVPADDLTDPSPATTFAHLDSTVTLSRQIASLGIYPAIDPLNSTSRQLDPYIVGDEHYETALGVQSILQRYQELKDIIAILGMDELAEKDKLLVSRARKIQRFLSQPFFVAEVFTGFPGKYVSLKDNIRAFKGIIKGEFDDLPEQAFYMVGSIEEVIEKAKKL</sequence>
<keyword id="KW-0066">ATP synthesis</keyword>
<keyword id="KW-0067">ATP-binding</keyword>
<keyword id="KW-1003">Cell membrane</keyword>
<keyword id="KW-0139">CF(1)</keyword>
<keyword id="KW-0375">Hydrogen ion transport</keyword>
<keyword id="KW-0406">Ion transport</keyword>
<keyword id="KW-0472">Membrane</keyword>
<keyword id="KW-0547">Nucleotide-binding</keyword>
<keyword id="KW-1278">Translocase</keyword>
<keyword id="KW-0813">Transport</keyword>
<organism>
    <name type="scientific">Buchnera aphidicola subsp. Acyrthosiphon pisum (strain 5A)</name>
    <dbReference type="NCBI Taxonomy" id="563178"/>
    <lineage>
        <taxon>Bacteria</taxon>
        <taxon>Pseudomonadati</taxon>
        <taxon>Pseudomonadota</taxon>
        <taxon>Gammaproteobacteria</taxon>
        <taxon>Enterobacterales</taxon>
        <taxon>Erwiniaceae</taxon>
        <taxon>Buchnera</taxon>
    </lineage>
</organism>